<proteinExistence type="inferred from homology"/>
<keyword id="KW-0997">Cell inner membrane</keyword>
<keyword id="KW-1003">Cell membrane</keyword>
<keyword id="KW-0406">Ion transport</keyword>
<keyword id="KW-0472">Membrane</keyword>
<keyword id="KW-0630">Potassium</keyword>
<keyword id="KW-0633">Potassium transport</keyword>
<keyword id="KW-0769">Symport</keyword>
<keyword id="KW-0812">Transmembrane</keyword>
<keyword id="KW-1133">Transmembrane helix</keyword>
<keyword id="KW-0813">Transport</keyword>
<comment type="function">
    <text evidence="1">Transport of potassium into the cell. Likely operates as a K(+):H(+) symporter.</text>
</comment>
<comment type="catalytic activity">
    <reaction evidence="1">
        <text>K(+)(in) + H(+)(in) = K(+)(out) + H(+)(out)</text>
        <dbReference type="Rhea" id="RHEA:28490"/>
        <dbReference type="ChEBI" id="CHEBI:15378"/>
        <dbReference type="ChEBI" id="CHEBI:29103"/>
    </reaction>
    <physiologicalReaction direction="right-to-left" evidence="1">
        <dbReference type="Rhea" id="RHEA:28492"/>
    </physiologicalReaction>
</comment>
<comment type="subcellular location">
    <subcellularLocation>
        <location evidence="1">Cell inner membrane</location>
        <topology evidence="1">Multi-pass membrane protein</topology>
    </subcellularLocation>
</comment>
<comment type="similarity">
    <text evidence="1">Belongs to the HAK/KUP transporter (TC 2.A.72) family.</text>
</comment>
<comment type="sequence caution" evidence="2">
    <conflict type="erroneous initiation">
        <sequence resource="EMBL-CDS" id="ABA51147"/>
    </conflict>
</comment>
<sequence length="630" mass="68633">MTDTNHSSMRQHSLQSLAIAAIGVVFGDIGTSPLYSLKEAFSPAHGIPLTPSAILGVISLLFWAIILVVGIKYVLFVMRADNNGEGGVLALMALSLRPLNPKSRITGLMMALGIFGACMFYGDAVITPAISVMSAVEGLEVATPQLSHLVLPITIVILIALFWIQRHGTATVGKLFGPIMVLWFVTIAALGIYHIARAPMIVSAINPYYAFSFMSEHVLLAYVVLGSVVLVLTGAEALYADMGHFGAKPIRLAAYVLVMPSLVLNYFGQGALLLLDPKAIENPFFLLAPQWAALPLVVLSTVATVIASQAVISGAYSLTSQAIQLGYVPRMKILHTSELAIGQIYVPVVNWLLLFVILCIVIGFKSSDNLAAAYGIAVTATMVITTILAAVVMVKVWNWNKLLVAMIIGVFLVIDLGFFGANLLKVEQGGWLPLGIGALLFFLLMTWYKGRHIVKERTAADGIPLAPFLQGLLAHPPHRVSGTAIYLTGNDTLVPVSLLHNLKHNKVLHERTIFMTFVTRDIPYVKDHERVTVHDAGEGLYIVKAEYGFNETPDVKAVLEEVARQRGMTFELMDTSFFLARETVVPTHLPGMSIWRERVFAWMHQNAAKPTDFFAIPANRVVELGTKIEI</sequence>
<name>KUP_BURP1</name>
<feature type="chain" id="PRO_0000279772" description="Probable potassium transport system protein Kup">
    <location>
        <begin position="1"/>
        <end position="630"/>
    </location>
</feature>
<feature type="transmembrane region" description="Helical" evidence="1">
    <location>
        <begin position="17"/>
        <end position="37"/>
    </location>
</feature>
<feature type="transmembrane region" description="Helical" evidence="1">
    <location>
        <begin position="51"/>
        <end position="71"/>
    </location>
</feature>
<feature type="transmembrane region" description="Helical" evidence="1">
    <location>
        <begin position="105"/>
        <end position="125"/>
    </location>
</feature>
<feature type="transmembrane region" description="Helical" evidence="1">
    <location>
        <begin position="144"/>
        <end position="164"/>
    </location>
</feature>
<feature type="transmembrane region" description="Helical" evidence="1">
    <location>
        <begin position="175"/>
        <end position="195"/>
    </location>
</feature>
<feature type="transmembrane region" description="Helical" evidence="1">
    <location>
        <begin position="218"/>
        <end position="238"/>
    </location>
</feature>
<feature type="transmembrane region" description="Helical" evidence="1">
    <location>
        <begin position="255"/>
        <end position="275"/>
    </location>
</feature>
<feature type="transmembrane region" description="Helical" evidence="1">
    <location>
        <begin position="283"/>
        <end position="303"/>
    </location>
</feature>
<feature type="transmembrane region" description="Helical" evidence="1">
    <location>
        <begin position="344"/>
        <end position="364"/>
    </location>
</feature>
<feature type="transmembrane region" description="Helical" evidence="1">
    <location>
        <begin position="374"/>
        <end position="394"/>
    </location>
</feature>
<feature type="transmembrane region" description="Helical" evidence="1">
    <location>
        <begin position="402"/>
        <end position="422"/>
    </location>
</feature>
<feature type="transmembrane region" description="Helical" evidence="1">
    <location>
        <begin position="428"/>
        <end position="448"/>
    </location>
</feature>
<organism>
    <name type="scientific">Burkholderia pseudomallei (strain 1710b)</name>
    <dbReference type="NCBI Taxonomy" id="320372"/>
    <lineage>
        <taxon>Bacteria</taxon>
        <taxon>Pseudomonadati</taxon>
        <taxon>Pseudomonadota</taxon>
        <taxon>Betaproteobacteria</taxon>
        <taxon>Burkholderiales</taxon>
        <taxon>Burkholderiaceae</taxon>
        <taxon>Burkholderia</taxon>
        <taxon>pseudomallei group</taxon>
    </lineage>
</organism>
<evidence type="ECO:0000255" key="1">
    <source>
        <dbReference type="HAMAP-Rule" id="MF_01522"/>
    </source>
</evidence>
<evidence type="ECO:0000305" key="2"/>
<reference key="1">
    <citation type="journal article" date="2010" name="Genome Biol. Evol.">
        <title>Continuing evolution of Burkholderia mallei through genome reduction and large-scale rearrangements.</title>
        <authorList>
            <person name="Losada L."/>
            <person name="Ronning C.M."/>
            <person name="DeShazer D."/>
            <person name="Woods D."/>
            <person name="Fedorova N."/>
            <person name="Kim H.S."/>
            <person name="Shabalina S.A."/>
            <person name="Pearson T.R."/>
            <person name="Brinkac L."/>
            <person name="Tan P."/>
            <person name="Nandi T."/>
            <person name="Crabtree J."/>
            <person name="Badger J."/>
            <person name="Beckstrom-Sternberg S."/>
            <person name="Saqib M."/>
            <person name="Schutzer S.E."/>
            <person name="Keim P."/>
            <person name="Nierman W.C."/>
        </authorList>
    </citation>
    <scope>NUCLEOTIDE SEQUENCE [LARGE SCALE GENOMIC DNA]</scope>
    <source>
        <strain>1710b</strain>
    </source>
</reference>
<dbReference type="EMBL" id="CP000124">
    <property type="protein sequence ID" value="ABA51147.1"/>
    <property type="status" value="ALT_INIT"/>
    <property type="molecule type" value="Genomic_DNA"/>
</dbReference>
<dbReference type="RefSeq" id="WP_004521342.1">
    <property type="nucleotide sequence ID" value="NC_007434.1"/>
</dbReference>
<dbReference type="EnsemblBacteria" id="ABA51147">
    <property type="protein sequence ID" value="ABA51147"/>
    <property type="gene ID" value="BURPS1710b_2341"/>
</dbReference>
<dbReference type="KEGG" id="bpm:BURPS1710b_2341"/>
<dbReference type="HOGENOM" id="CLU_008142_4_2_4"/>
<dbReference type="Proteomes" id="UP000002700">
    <property type="component" value="Chromosome I"/>
</dbReference>
<dbReference type="GO" id="GO:0005886">
    <property type="term" value="C:plasma membrane"/>
    <property type="evidence" value="ECO:0007669"/>
    <property type="project" value="UniProtKB-SubCell"/>
</dbReference>
<dbReference type="GO" id="GO:0015079">
    <property type="term" value="F:potassium ion transmembrane transporter activity"/>
    <property type="evidence" value="ECO:0007669"/>
    <property type="project" value="UniProtKB-UniRule"/>
</dbReference>
<dbReference type="GO" id="GO:0015293">
    <property type="term" value="F:symporter activity"/>
    <property type="evidence" value="ECO:0007669"/>
    <property type="project" value="UniProtKB-UniRule"/>
</dbReference>
<dbReference type="HAMAP" id="MF_01522">
    <property type="entry name" value="Kup"/>
    <property type="match status" value="1"/>
</dbReference>
<dbReference type="InterPro" id="IPR003855">
    <property type="entry name" value="K+_transporter"/>
</dbReference>
<dbReference type="InterPro" id="IPR053952">
    <property type="entry name" value="K_trans_C"/>
</dbReference>
<dbReference type="InterPro" id="IPR053951">
    <property type="entry name" value="K_trans_N"/>
</dbReference>
<dbReference type="InterPro" id="IPR023051">
    <property type="entry name" value="Kup"/>
</dbReference>
<dbReference type="PANTHER" id="PTHR30540:SF79">
    <property type="entry name" value="LOW AFFINITY POTASSIUM TRANSPORT SYSTEM PROTEIN KUP"/>
    <property type="match status" value="1"/>
</dbReference>
<dbReference type="PANTHER" id="PTHR30540">
    <property type="entry name" value="OSMOTIC STRESS POTASSIUM TRANSPORTER"/>
    <property type="match status" value="1"/>
</dbReference>
<dbReference type="Pfam" id="PF02705">
    <property type="entry name" value="K_trans"/>
    <property type="match status" value="1"/>
</dbReference>
<dbReference type="Pfam" id="PF22776">
    <property type="entry name" value="K_trans_C"/>
    <property type="match status" value="1"/>
</dbReference>
<protein>
    <recommendedName>
        <fullName evidence="1">Probable potassium transport system protein Kup</fullName>
    </recommendedName>
</protein>
<accession>Q3JRR7</accession>
<gene>
    <name evidence="1" type="primary">kup</name>
    <name type="ordered locus">BURPS1710b_2341</name>
</gene>